<name>FADB_PSYA2</name>
<reference key="1">
    <citation type="journal article" date="2010" name="Appl. Environ. Microbiol.">
        <title>The genome sequence of Psychrobacter arcticus 273-4, a psychroactive Siberian permafrost bacterium, reveals mechanisms for adaptation to low-temperature growth.</title>
        <authorList>
            <person name="Ayala-del-Rio H.L."/>
            <person name="Chain P.S."/>
            <person name="Grzymski J.J."/>
            <person name="Ponder M.A."/>
            <person name="Ivanova N."/>
            <person name="Bergholz P.W."/>
            <person name="Di Bartolo G."/>
            <person name="Hauser L."/>
            <person name="Land M."/>
            <person name="Bakermans C."/>
            <person name="Rodrigues D."/>
            <person name="Klappenbach J."/>
            <person name="Zarka D."/>
            <person name="Larimer F."/>
            <person name="Richardson P."/>
            <person name="Murray A."/>
            <person name="Thomashow M."/>
            <person name="Tiedje J.M."/>
        </authorList>
    </citation>
    <scope>NUCLEOTIDE SEQUENCE [LARGE SCALE GENOMIC DNA]</scope>
    <source>
        <strain>DSM 17307 / VKM B-2377 / 273-4</strain>
    </source>
</reference>
<evidence type="ECO:0000255" key="1">
    <source>
        <dbReference type="HAMAP-Rule" id="MF_01621"/>
    </source>
</evidence>
<feature type="chain" id="PRO_0000109283" description="Fatty acid oxidation complex subunit alpha">
    <location>
        <begin position="1"/>
        <end position="719"/>
    </location>
</feature>
<feature type="region of interest" description="Enoyl-CoA hydratase/isomerase" evidence="1">
    <location>
        <begin position="1"/>
        <end position="190"/>
    </location>
</feature>
<feature type="region of interest" description="3-hydroxyacyl-CoA dehydrogenase" evidence="1">
    <location>
        <begin position="313"/>
        <end position="719"/>
    </location>
</feature>
<feature type="active site" description="For 3-hydroxyacyl-CoA dehydrogenase activity" evidence="1">
    <location>
        <position position="452"/>
    </location>
</feature>
<feature type="binding site" evidence="1">
    <location>
        <position position="298"/>
    </location>
    <ligand>
        <name>substrate</name>
    </ligand>
</feature>
<feature type="binding site" evidence="1">
    <location>
        <position position="326"/>
    </location>
    <ligand>
        <name>NAD(+)</name>
        <dbReference type="ChEBI" id="CHEBI:57540"/>
    </ligand>
</feature>
<feature type="binding site" evidence="1">
    <location>
        <position position="345"/>
    </location>
    <ligand>
        <name>NAD(+)</name>
        <dbReference type="ChEBI" id="CHEBI:57540"/>
    </ligand>
</feature>
<feature type="binding site" evidence="1">
    <location>
        <begin position="402"/>
        <end position="404"/>
    </location>
    <ligand>
        <name>NAD(+)</name>
        <dbReference type="ChEBI" id="CHEBI:57540"/>
    </ligand>
</feature>
<feature type="binding site" evidence="1">
    <location>
        <position position="409"/>
    </location>
    <ligand>
        <name>NAD(+)</name>
        <dbReference type="ChEBI" id="CHEBI:57540"/>
    </ligand>
</feature>
<feature type="binding site" evidence="1">
    <location>
        <position position="431"/>
    </location>
    <ligand>
        <name>NAD(+)</name>
        <dbReference type="ChEBI" id="CHEBI:57540"/>
    </ligand>
</feature>
<feature type="binding site" evidence="1">
    <location>
        <position position="455"/>
    </location>
    <ligand>
        <name>NAD(+)</name>
        <dbReference type="ChEBI" id="CHEBI:57540"/>
    </ligand>
</feature>
<feature type="binding site" evidence="1">
    <location>
        <position position="502"/>
    </location>
    <ligand>
        <name>substrate</name>
    </ligand>
</feature>
<feature type="site" description="Important for catalytic activity" evidence="1">
    <location>
        <position position="120"/>
    </location>
</feature>
<feature type="site" description="Important for catalytic activity" evidence="1">
    <location>
        <position position="140"/>
    </location>
</feature>
<dbReference type="EC" id="4.2.1.17" evidence="1"/>
<dbReference type="EC" id="5.1.2.3" evidence="1"/>
<dbReference type="EC" id="5.3.3.8" evidence="1"/>
<dbReference type="EC" id="1.1.1.35" evidence="1"/>
<dbReference type="EMBL" id="CP000082">
    <property type="protein sequence ID" value="AAZ19782.1"/>
    <property type="molecule type" value="Genomic_DNA"/>
</dbReference>
<dbReference type="RefSeq" id="WP_011281191.1">
    <property type="nucleotide sequence ID" value="NC_007204.1"/>
</dbReference>
<dbReference type="SMR" id="Q4FQC6"/>
<dbReference type="STRING" id="259536.Psyc_1934"/>
<dbReference type="KEGG" id="par:Psyc_1934"/>
<dbReference type="eggNOG" id="COG1024">
    <property type="taxonomic scope" value="Bacteria"/>
</dbReference>
<dbReference type="eggNOG" id="COG1250">
    <property type="taxonomic scope" value="Bacteria"/>
</dbReference>
<dbReference type="HOGENOM" id="CLU_009834_16_3_6"/>
<dbReference type="OrthoDB" id="5389341at2"/>
<dbReference type="UniPathway" id="UPA00659"/>
<dbReference type="Proteomes" id="UP000000546">
    <property type="component" value="Chromosome"/>
</dbReference>
<dbReference type="GO" id="GO:0036125">
    <property type="term" value="C:fatty acid beta-oxidation multienzyme complex"/>
    <property type="evidence" value="ECO:0007669"/>
    <property type="project" value="InterPro"/>
</dbReference>
<dbReference type="GO" id="GO:0008692">
    <property type="term" value="F:3-hydroxybutyryl-CoA epimerase activity"/>
    <property type="evidence" value="ECO:0007669"/>
    <property type="project" value="UniProtKB-UniRule"/>
</dbReference>
<dbReference type="GO" id="GO:0004165">
    <property type="term" value="F:delta(3)-delta(2)-enoyl-CoA isomerase activity"/>
    <property type="evidence" value="ECO:0007669"/>
    <property type="project" value="UniProtKB-UniRule"/>
</dbReference>
<dbReference type="GO" id="GO:0004300">
    <property type="term" value="F:enoyl-CoA hydratase activity"/>
    <property type="evidence" value="ECO:0007669"/>
    <property type="project" value="UniProtKB-UniRule"/>
</dbReference>
<dbReference type="GO" id="GO:0016509">
    <property type="term" value="F:long-chain-3-hydroxyacyl-CoA dehydrogenase activity"/>
    <property type="evidence" value="ECO:0007669"/>
    <property type="project" value="TreeGrafter"/>
</dbReference>
<dbReference type="GO" id="GO:0070403">
    <property type="term" value="F:NAD+ binding"/>
    <property type="evidence" value="ECO:0007669"/>
    <property type="project" value="InterPro"/>
</dbReference>
<dbReference type="GO" id="GO:0006635">
    <property type="term" value="P:fatty acid beta-oxidation"/>
    <property type="evidence" value="ECO:0007669"/>
    <property type="project" value="UniProtKB-UniRule"/>
</dbReference>
<dbReference type="CDD" id="cd06558">
    <property type="entry name" value="crotonase-like"/>
    <property type="match status" value="1"/>
</dbReference>
<dbReference type="FunFam" id="3.40.50.720:FF:000009">
    <property type="entry name" value="Fatty oxidation complex, alpha subunit"/>
    <property type="match status" value="1"/>
</dbReference>
<dbReference type="Gene3D" id="1.10.1040.50">
    <property type="match status" value="1"/>
</dbReference>
<dbReference type="Gene3D" id="3.90.226.10">
    <property type="entry name" value="2-enoyl-CoA Hydratase, Chain A, domain 1"/>
    <property type="match status" value="1"/>
</dbReference>
<dbReference type="Gene3D" id="3.40.50.720">
    <property type="entry name" value="NAD(P)-binding Rossmann-like Domain"/>
    <property type="match status" value="1"/>
</dbReference>
<dbReference type="HAMAP" id="MF_01621">
    <property type="entry name" value="FadB"/>
    <property type="match status" value="1"/>
</dbReference>
<dbReference type="InterPro" id="IPR006180">
    <property type="entry name" value="3-OHacyl-CoA_DH_CS"/>
</dbReference>
<dbReference type="InterPro" id="IPR006176">
    <property type="entry name" value="3-OHacyl-CoA_DH_NAD-bd"/>
</dbReference>
<dbReference type="InterPro" id="IPR006108">
    <property type="entry name" value="3HC_DH_C"/>
</dbReference>
<dbReference type="InterPro" id="IPR008927">
    <property type="entry name" value="6-PGluconate_DH-like_C_sf"/>
</dbReference>
<dbReference type="InterPro" id="IPR029045">
    <property type="entry name" value="ClpP/crotonase-like_dom_sf"/>
</dbReference>
<dbReference type="InterPro" id="IPR001753">
    <property type="entry name" value="Enoyl-CoA_hydra/iso"/>
</dbReference>
<dbReference type="InterPro" id="IPR050136">
    <property type="entry name" value="FA_oxidation_alpha_subunit"/>
</dbReference>
<dbReference type="InterPro" id="IPR012799">
    <property type="entry name" value="FadB"/>
</dbReference>
<dbReference type="InterPro" id="IPR036291">
    <property type="entry name" value="NAD(P)-bd_dom_sf"/>
</dbReference>
<dbReference type="NCBIfam" id="TIGR02437">
    <property type="entry name" value="FadB"/>
    <property type="match status" value="1"/>
</dbReference>
<dbReference type="NCBIfam" id="NF008727">
    <property type="entry name" value="PRK11730.1"/>
    <property type="match status" value="1"/>
</dbReference>
<dbReference type="PANTHER" id="PTHR43612">
    <property type="entry name" value="TRIFUNCTIONAL ENZYME SUBUNIT ALPHA"/>
    <property type="match status" value="1"/>
</dbReference>
<dbReference type="PANTHER" id="PTHR43612:SF3">
    <property type="entry name" value="TRIFUNCTIONAL ENZYME SUBUNIT ALPHA, MITOCHONDRIAL"/>
    <property type="match status" value="1"/>
</dbReference>
<dbReference type="Pfam" id="PF00725">
    <property type="entry name" value="3HCDH"/>
    <property type="match status" value="2"/>
</dbReference>
<dbReference type="Pfam" id="PF02737">
    <property type="entry name" value="3HCDH_N"/>
    <property type="match status" value="1"/>
</dbReference>
<dbReference type="Pfam" id="PF00378">
    <property type="entry name" value="ECH_1"/>
    <property type="match status" value="1"/>
</dbReference>
<dbReference type="SUPFAM" id="SSF48179">
    <property type="entry name" value="6-phosphogluconate dehydrogenase C-terminal domain-like"/>
    <property type="match status" value="2"/>
</dbReference>
<dbReference type="SUPFAM" id="SSF52096">
    <property type="entry name" value="ClpP/crotonase"/>
    <property type="match status" value="1"/>
</dbReference>
<dbReference type="SUPFAM" id="SSF51735">
    <property type="entry name" value="NAD(P)-binding Rossmann-fold domains"/>
    <property type="match status" value="1"/>
</dbReference>
<dbReference type="PROSITE" id="PS00067">
    <property type="entry name" value="3HCDH"/>
    <property type="match status" value="1"/>
</dbReference>
<sequence>MVYQGNRITVTMLEDGIANMQYNAENESVNKFDTETNKQFAEVVNALEKADDVKGLIVTSSKGVFIAGADITEFVASFKQSEEEIKDWVININDAFNRFEDLPFPKVAAINGAALGGGCEMTLVCEYRVMSDKAIIGLPETQLGIFPGFGGTVRSTRVIGIDNALELIATGAPKKALDALKLGLVDATVAADDLQDAAIDLVKKCISGELDWKAKREEKLVAVKLNQLEQAMAFNSAKGMIFAKANPKQYPAPALAIAAIEKHVNLPRDKAIEVEAAGFAKAAKTPQAESLVGLFLSDQLVKKLAKQHSKKAHEINEAAVLGAGIMGGGIAYQAASKGLPIIMKDIKSEQLDLGMGEASKLLGKMVDRGKMTPAKMGETLSRIRPTLNYGDFAETDIVIEAVVENPNVKRAVLKEVEGLVKDDCILASNTSTISITFLAEALERPENFVGMHFFNPVHRMPLVEVIRGEKSSEEAIATTVALASKMGKVPVVVNDCPGFLVNRVLFPYFGAFDLLLKQGADFAHVDKVMEKFGWPMGPAYLIDVVGLDTGVHGAEVMAEGFPDRMKPDYKGAIELLYENKRLGQKNGVGFYKYEMDKRGKPKKVADEATYELLKTTTDSEKQTFDDQAIIDRTMLAFCNETVRCLEDNIVSTPSEADMAMIMGVGFPPFRGGPCRYIDQMGLDNYLALCEKYAHLGKAYEAPQKIRDMAAAGETFYATA</sequence>
<keyword id="KW-0276">Fatty acid metabolism</keyword>
<keyword id="KW-0413">Isomerase</keyword>
<keyword id="KW-0442">Lipid degradation</keyword>
<keyword id="KW-0443">Lipid metabolism</keyword>
<keyword id="KW-0456">Lyase</keyword>
<keyword id="KW-0511">Multifunctional enzyme</keyword>
<keyword id="KW-0520">NAD</keyword>
<keyword id="KW-0560">Oxidoreductase</keyword>
<keyword id="KW-1185">Reference proteome</keyword>
<protein>
    <recommendedName>
        <fullName evidence="1">Fatty acid oxidation complex subunit alpha</fullName>
    </recommendedName>
    <domain>
        <recommendedName>
            <fullName evidence="1">Enoyl-CoA hydratase/Delta(3)-cis-Delta(2)-trans-enoyl-CoA isomerase/3-hydroxybutyryl-CoA epimerase</fullName>
            <ecNumber evidence="1">4.2.1.17</ecNumber>
            <ecNumber evidence="1">5.1.2.3</ecNumber>
            <ecNumber evidence="1">5.3.3.8</ecNumber>
        </recommendedName>
    </domain>
    <domain>
        <recommendedName>
            <fullName evidence="1">3-hydroxyacyl-CoA dehydrogenase</fullName>
            <ecNumber evidence="1">1.1.1.35</ecNumber>
        </recommendedName>
    </domain>
</protein>
<proteinExistence type="inferred from homology"/>
<accession>Q4FQC6</accession>
<organism>
    <name type="scientific">Psychrobacter arcticus (strain DSM 17307 / VKM B-2377 / 273-4)</name>
    <dbReference type="NCBI Taxonomy" id="259536"/>
    <lineage>
        <taxon>Bacteria</taxon>
        <taxon>Pseudomonadati</taxon>
        <taxon>Pseudomonadota</taxon>
        <taxon>Gammaproteobacteria</taxon>
        <taxon>Moraxellales</taxon>
        <taxon>Moraxellaceae</taxon>
        <taxon>Psychrobacter</taxon>
    </lineage>
</organism>
<comment type="function">
    <text evidence="1">Involved in the aerobic and anaerobic degradation of long-chain fatty acids via beta-oxidation cycle. Catalyzes the formation of 3-oxoacyl-CoA from enoyl-CoA via L-3-hydroxyacyl-CoA. It can also use D-3-hydroxyacyl-CoA and cis-3-enoyl-CoA as substrate.</text>
</comment>
<comment type="catalytic activity">
    <reaction evidence="1">
        <text>a (3S)-3-hydroxyacyl-CoA + NAD(+) = a 3-oxoacyl-CoA + NADH + H(+)</text>
        <dbReference type="Rhea" id="RHEA:22432"/>
        <dbReference type="ChEBI" id="CHEBI:15378"/>
        <dbReference type="ChEBI" id="CHEBI:57318"/>
        <dbReference type="ChEBI" id="CHEBI:57540"/>
        <dbReference type="ChEBI" id="CHEBI:57945"/>
        <dbReference type="ChEBI" id="CHEBI:90726"/>
        <dbReference type="EC" id="1.1.1.35"/>
    </reaction>
</comment>
<comment type="catalytic activity">
    <reaction evidence="1">
        <text>a (3S)-3-hydroxyacyl-CoA = a (2E)-enoyl-CoA + H2O</text>
        <dbReference type="Rhea" id="RHEA:16105"/>
        <dbReference type="ChEBI" id="CHEBI:15377"/>
        <dbReference type="ChEBI" id="CHEBI:57318"/>
        <dbReference type="ChEBI" id="CHEBI:58856"/>
        <dbReference type="EC" id="4.2.1.17"/>
    </reaction>
</comment>
<comment type="catalytic activity">
    <reaction evidence="1">
        <text>a 4-saturated-(3S)-3-hydroxyacyl-CoA = a (3E)-enoyl-CoA + H2O</text>
        <dbReference type="Rhea" id="RHEA:20724"/>
        <dbReference type="ChEBI" id="CHEBI:15377"/>
        <dbReference type="ChEBI" id="CHEBI:58521"/>
        <dbReference type="ChEBI" id="CHEBI:137480"/>
        <dbReference type="EC" id="4.2.1.17"/>
    </reaction>
</comment>
<comment type="catalytic activity">
    <reaction evidence="1">
        <text>(3S)-3-hydroxybutanoyl-CoA = (3R)-3-hydroxybutanoyl-CoA</text>
        <dbReference type="Rhea" id="RHEA:21760"/>
        <dbReference type="ChEBI" id="CHEBI:57315"/>
        <dbReference type="ChEBI" id="CHEBI:57316"/>
        <dbReference type="EC" id="5.1.2.3"/>
    </reaction>
</comment>
<comment type="catalytic activity">
    <reaction evidence="1">
        <text>a (3Z)-enoyl-CoA = a 4-saturated (2E)-enoyl-CoA</text>
        <dbReference type="Rhea" id="RHEA:45900"/>
        <dbReference type="ChEBI" id="CHEBI:85097"/>
        <dbReference type="ChEBI" id="CHEBI:85489"/>
        <dbReference type="EC" id="5.3.3.8"/>
    </reaction>
</comment>
<comment type="catalytic activity">
    <reaction evidence="1">
        <text>a (3E)-enoyl-CoA = a 4-saturated (2E)-enoyl-CoA</text>
        <dbReference type="Rhea" id="RHEA:45228"/>
        <dbReference type="ChEBI" id="CHEBI:58521"/>
        <dbReference type="ChEBI" id="CHEBI:85097"/>
        <dbReference type="EC" id="5.3.3.8"/>
    </reaction>
</comment>
<comment type="pathway">
    <text evidence="1">Lipid metabolism; fatty acid beta-oxidation.</text>
</comment>
<comment type="subunit">
    <text evidence="1">Heterotetramer of two alpha chains (FadB) and two beta chains (FadA).</text>
</comment>
<comment type="similarity">
    <text evidence="1">In the N-terminal section; belongs to the enoyl-CoA hydratase/isomerase family.</text>
</comment>
<comment type="similarity">
    <text evidence="1">In the C-terminal section; belongs to the 3-hydroxyacyl-CoA dehydrogenase family.</text>
</comment>
<gene>
    <name evidence="1" type="primary">fadB</name>
    <name type="ordered locus">Psyc_1934</name>
</gene>